<evidence type="ECO:0000255" key="1">
    <source>
        <dbReference type="HAMAP-Rule" id="MF_00255"/>
    </source>
</evidence>
<gene>
    <name evidence="1" type="primary">glyS</name>
    <name type="ordered locus">BUAP5A_133</name>
</gene>
<reference key="1">
    <citation type="journal article" date="2009" name="Science">
        <title>The dynamics and time scale of ongoing genomic erosion in symbiotic bacteria.</title>
        <authorList>
            <person name="Moran N.A."/>
            <person name="McLaughlin H.J."/>
            <person name="Sorek R."/>
        </authorList>
    </citation>
    <scope>NUCLEOTIDE SEQUENCE [LARGE SCALE GENOMIC DNA]</scope>
    <source>
        <strain>5A</strain>
    </source>
</reference>
<comment type="catalytic activity">
    <reaction evidence="1">
        <text>tRNA(Gly) + glycine + ATP = glycyl-tRNA(Gly) + AMP + diphosphate</text>
        <dbReference type="Rhea" id="RHEA:16013"/>
        <dbReference type="Rhea" id="RHEA-COMP:9664"/>
        <dbReference type="Rhea" id="RHEA-COMP:9683"/>
        <dbReference type="ChEBI" id="CHEBI:30616"/>
        <dbReference type="ChEBI" id="CHEBI:33019"/>
        <dbReference type="ChEBI" id="CHEBI:57305"/>
        <dbReference type="ChEBI" id="CHEBI:78442"/>
        <dbReference type="ChEBI" id="CHEBI:78522"/>
        <dbReference type="ChEBI" id="CHEBI:456215"/>
        <dbReference type="EC" id="6.1.1.14"/>
    </reaction>
</comment>
<comment type="subunit">
    <text evidence="1">Tetramer of two alpha and two beta subunits.</text>
</comment>
<comment type="subcellular location">
    <subcellularLocation>
        <location evidence="1">Cytoplasm</location>
    </subcellularLocation>
</comment>
<comment type="similarity">
    <text evidence="1">Belongs to the class-II aminoacyl-tRNA synthetase family.</text>
</comment>
<name>SYGB_BUCA5</name>
<organism>
    <name type="scientific">Buchnera aphidicola subsp. Acyrthosiphon pisum (strain 5A)</name>
    <dbReference type="NCBI Taxonomy" id="563178"/>
    <lineage>
        <taxon>Bacteria</taxon>
        <taxon>Pseudomonadati</taxon>
        <taxon>Pseudomonadota</taxon>
        <taxon>Gammaproteobacteria</taxon>
        <taxon>Enterobacterales</taxon>
        <taxon>Erwiniaceae</taxon>
        <taxon>Buchnera</taxon>
    </lineage>
</organism>
<protein>
    <recommendedName>
        <fullName evidence="1">Glycine--tRNA ligase beta subunit</fullName>
        <ecNumber evidence="1">6.1.1.14</ecNumber>
    </recommendedName>
    <alternativeName>
        <fullName evidence="1">Glycyl-tRNA synthetase beta subunit</fullName>
        <shortName evidence="1">GlyRS</shortName>
    </alternativeName>
</protein>
<dbReference type="EC" id="6.1.1.14" evidence="1"/>
<dbReference type="EMBL" id="CP001161">
    <property type="protein sequence ID" value="ACL30508.1"/>
    <property type="molecule type" value="Genomic_DNA"/>
</dbReference>
<dbReference type="RefSeq" id="WP_009874091.1">
    <property type="nucleotide sequence ID" value="NC_011833.1"/>
</dbReference>
<dbReference type="SMR" id="B8D8T6"/>
<dbReference type="KEGG" id="bap:BUAP5A_133"/>
<dbReference type="HOGENOM" id="CLU_007220_2_2_6"/>
<dbReference type="OrthoDB" id="9775440at2"/>
<dbReference type="Proteomes" id="UP000006904">
    <property type="component" value="Chromosome"/>
</dbReference>
<dbReference type="GO" id="GO:0005829">
    <property type="term" value="C:cytosol"/>
    <property type="evidence" value="ECO:0007669"/>
    <property type="project" value="TreeGrafter"/>
</dbReference>
<dbReference type="GO" id="GO:0004814">
    <property type="term" value="F:arginine-tRNA ligase activity"/>
    <property type="evidence" value="ECO:0007669"/>
    <property type="project" value="InterPro"/>
</dbReference>
<dbReference type="GO" id="GO:0005524">
    <property type="term" value="F:ATP binding"/>
    <property type="evidence" value="ECO:0007669"/>
    <property type="project" value="UniProtKB-UniRule"/>
</dbReference>
<dbReference type="GO" id="GO:0004820">
    <property type="term" value="F:glycine-tRNA ligase activity"/>
    <property type="evidence" value="ECO:0007669"/>
    <property type="project" value="UniProtKB-UniRule"/>
</dbReference>
<dbReference type="GO" id="GO:0006420">
    <property type="term" value="P:arginyl-tRNA aminoacylation"/>
    <property type="evidence" value="ECO:0007669"/>
    <property type="project" value="InterPro"/>
</dbReference>
<dbReference type="GO" id="GO:0006426">
    <property type="term" value="P:glycyl-tRNA aminoacylation"/>
    <property type="evidence" value="ECO:0007669"/>
    <property type="project" value="UniProtKB-UniRule"/>
</dbReference>
<dbReference type="HAMAP" id="MF_00255">
    <property type="entry name" value="Gly_tRNA_synth_beta"/>
    <property type="match status" value="1"/>
</dbReference>
<dbReference type="InterPro" id="IPR008909">
    <property type="entry name" value="DALR_anticod-bd"/>
</dbReference>
<dbReference type="InterPro" id="IPR015944">
    <property type="entry name" value="Gly-tRNA-synth_bsu"/>
</dbReference>
<dbReference type="InterPro" id="IPR006194">
    <property type="entry name" value="Gly-tRNA-synth_heterodimer"/>
</dbReference>
<dbReference type="NCBIfam" id="TIGR00211">
    <property type="entry name" value="glyS"/>
    <property type="match status" value="1"/>
</dbReference>
<dbReference type="PANTHER" id="PTHR30075:SF2">
    <property type="entry name" value="GLYCINE--TRNA LIGASE, CHLOROPLASTIC_MITOCHONDRIAL 2"/>
    <property type="match status" value="1"/>
</dbReference>
<dbReference type="PANTHER" id="PTHR30075">
    <property type="entry name" value="GLYCYL-TRNA SYNTHETASE"/>
    <property type="match status" value="1"/>
</dbReference>
<dbReference type="Pfam" id="PF05746">
    <property type="entry name" value="DALR_1"/>
    <property type="match status" value="1"/>
</dbReference>
<dbReference type="Pfam" id="PF02092">
    <property type="entry name" value="tRNA_synt_2f"/>
    <property type="match status" value="1"/>
</dbReference>
<dbReference type="PRINTS" id="PR01045">
    <property type="entry name" value="TRNASYNTHGB"/>
</dbReference>
<dbReference type="SUPFAM" id="SSF109604">
    <property type="entry name" value="HD-domain/PDEase-like"/>
    <property type="match status" value="1"/>
</dbReference>
<dbReference type="PROSITE" id="PS50861">
    <property type="entry name" value="AA_TRNA_LIGASE_II_GLYAB"/>
    <property type="match status" value="1"/>
</dbReference>
<sequence length="690" mass="80803">MTKKILLIEIGTEELPARLLSKISLYFYKNFIKELDFHNISYKNIKYFSTPRRLALKIKDIDITERFVEIKKRGPSIINSYDKDGFLTEAATRWLKHCGININQAIRLKNEKGEWLFYKTRKKQENIESLIPKITESALKNISIKKSMRWGQDNQKFSRPIRNIVILLDKKVIPGDVFNITSKNLLQNHLSSKDSQIKIKDAKDYPKILLEKNNIIADYFIRKEKIIEDIENIAKKIKGFIKKNNVLIEEVTALVESPKALLVNFQEKFLQIPKKILINTIEKKQKCFPIYNSEKKLLPYFIFISNIQTQESEKIIIGNQRVMHARLSDAEFFFKNDRKVKLESRLLSLKKVLFQNNLGSLYEKTLRIKLLIKWIAKYSSSDVEDSIRAALLSKCDLVTDVVCEFPELQGKIGMYYALEDKEKKDVATALEEQYLPRFSGDKLPCTPIGCGLSIADKMDTLSGMFYIGNIPSSDKDPFALRRLAIGIIRIILEKNIPLNLEDLIKKSLSLYNKKNEDDLILFDKMIKFFMIRLFHWYEETGYSAKIIKSVLSCKSIELIDIHKKIQAISFFKKLKDSQSIILSIKRISNILAKEKEKINGDINKKLMIEKEEIILFNNIEEFDNYTKNLFLEKKYNDILIKIKSFENPIYNFFKKVKIYHSDSKIRLNRLLLLSKLKKIFFKIADFSYLY</sequence>
<accession>B8D8T6</accession>
<feature type="chain" id="PRO_1000197170" description="Glycine--tRNA ligase beta subunit">
    <location>
        <begin position="1"/>
        <end position="690"/>
    </location>
</feature>
<proteinExistence type="inferred from homology"/>
<keyword id="KW-0030">Aminoacyl-tRNA synthetase</keyword>
<keyword id="KW-0067">ATP-binding</keyword>
<keyword id="KW-0963">Cytoplasm</keyword>
<keyword id="KW-0436">Ligase</keyword>
<keyword id="KW-0547">Nucleotide-binding</keyword>
<keyword id="KW-0648">Protein biosynthesis</keyword>